<sequence length="124" mass="13749">MATINQLVRKPRVKKVVKSNVPALEACPQKRGVCTRVYTTTPKKPNSALRKVCRIRLTNGFEVTSYIGGEGHNLQEHSVVLIRGGRVKDLPGVRYHTVRGALDCAGVKDRKQGRSKYGVKRPKA</sequence>
<dbReference type="EMBL" id="CP000057">
    <property type="protein sequence ID" value="AAX87659.1"/>
    <property type="molecule type" value="Genomic_DNA"/>
</dbReference>
<dbReference type="RefSeq" id="WP_005543325.1">
    <property type="nucleotide sequence ID" value="NC_007146.2"/>
</dbReference>
<dbReference type="SMR" id="Q4QMT8"/>
<dbReference type="GeneID" id="93298548"/>
<dbReference type="KEGG" id="hit:NTHI0745"/>
<dbReference type="HOGENOM" id="CLU_104295_1_2_6"/>
<dbReference type="Proteomes" id="UP000002525">
    <property type="component" value="Chromosome"/>
</dbReference>
<dbReference type="GO" id="GO:0015935">
    <property type="term" value="C:small ribosomal subunit"/>
    <property type="evidence" value="ECO:0007669"/>
    <property type="project" value="InterPro"/>
</dbReference>
<dbReference type="GO" id="GO:0019843">
    <property type="term" value="F:rRNA binding"/>
    <property type="evidence" value="ECO:0007669"/>
    <property type="project" value="UniProtKB-UniRule"/>
</dbReference>
<dbReference type="GO" id="GO:0003735">
    <property type="term" value="F:structural constituent of ribosome"/>
    <property type="evidence" value="ECO:0007669"/>
    <property type="project" value="InterPro"/>
</dbReference>
<dbReference type="GO" id="GO:0000049">
    <property type="term" value="F:tRNA binding"/>
    <property type="evidence" value="ECO:0007669"/>
    <property type="project" value="UniProtKB-UniRule"/>
</dbReference>
<dbReference type="GO" id="GO:0006412">
    <property type="term" value="P:translation"/>
    <property type="evidence" value="ECO:0007669"/>
    <property type="project" value="UniProtKB-UniRule"/>
</dbReference>
<dbReference type="CDD" id="cd03368">
    <property type="entry name" value="Ribosomal_S12"/>
    <property type="match status" value="1"/>
</dbReference>
<dbReference type="FunFam" id="2.40.50.140:FF:000001">
    <property type="entry name" value="30S ribosomal protein S12"/>
    <property type="match status" value="1"/>
</dbReference>
<dbReference type="Gene3D" id="2.40.50.140">
    <property type="entry name" value="Nucleic acid-binding proteins"/>
    <property type="match status" value="1"/>
</dbReference>
<dbReference type="HAMAP" id="MF_00403_B">
    <property type="entry name" value="Ribosomal_uS12_B"/>
    <property type="match status" value="1"/>
</dbReference>
<dbReference type="InterPro" id="IPR012340">
    <property type="entry name" value="NA-bd_OB-fold"/>
</dbReference>
<dbReference type="InterPro" id="IPR006032">
    <property type="entry name" value="Ribosomal_uS12"/>
</dbReference>
<dbReference type="InterPro" id="IPR005679">
    <property type="entry name" value="Ribosomal_uS12_bac"/>
</dbReference>
<dbReference type="NCBIfam" id="TIGR00981">
    <property type="entry name" value="rpsL_bact"/>
    <property type="match status" value="1"/>
</dbReference>
<dbReference type="PANTHER" id="PTHR11652">
    <property type="entry name" value="30S RIBOSOMAL PROTEIN S12 FAMILY MEMBER"/>
    <property type="match status" value="1"/>
</dbReference>
<dbReference type="Pfam" id="PF00164">
    <property type="entry name" value="Ribosom_S12_S23"/>
    <property type="match status" value="1"/>
</dbReference>
<dbReference type="PIRSF" id="PIRSF002133">
    <property type="entry name" value="Ribosomal_S12/S23"/>
    <property type="match status" value="1"/>
</dbReference>
<dbReference type="PRINTS" id="PR01034">
    <property type="entry name" value="RIBOSOMALS12"/>
</dbReference>
<dbReference type="SUPFAM" id="SSF50249">
    <property type="entry name" value="Nucleic acid-binding proteins"/>
    <property type="match status" value="1"/>
</dbReference>
<dbReference type="PROSITE" id="PS00055">
    <property type="entry name" value="RIBOSOMAL_S12"/>
    <property type="match status" value="1"/>
</dbReference>
<reference key="1">
    <citation type="journal article" date="2005" name="J. Bacteriol.">
        <title>Genomic sequence of an otitis media isolate of nontypeable Haemophilus influenzae: comparative study with H. influenzae serotype d, strain KW20.</title>
        <authorList>
            <person name="Harrison A."/>
            <person name="Dyer D.W."/>
            <person name="Gillaspy A."/>
            <person name="Ray W.C."/>
            <person name="Mungur R."/>
            <person name="Carson M.B."/>
            <person name="Zhong H."/>
            <person name="Gipson J."/>
            <person name="Gipson M."/>
            <person name="Johnson L.S."/>
            <person name="Lewis L."/>
            <person name="Bakaletz L.O."/>
            <person name="Munson R.S. Jr."/>
        </authorList>
    </citation>
    <scope>NUCLEOTIDE SEQUENCE [LARGE SCALE GENOMIC DNA]</scope>
    <source>
        <strain>86-028NP</strain>
    </source>
</reference>
<accession>Q4QMT8</accession>
<name>RS12_HAEI8</name>
<comment type="function">
    <text evidence="2">With S4 and S5 plays an important role in translational accuracy.</text>
</comment>
<comment type="function">
    <text evidence="2">Interacts with and stabilizes bases of the 16S rRNA that are involved in tRNA selection in the A site and with the mRNA backbone. Located at the interface of the 30S and 50S subunits, it traverses the body of the 30S subunit contacting proteins on the other side and probably holding the rRNA structure together. The combined cluster of proteins S8, S12 and S17 appears to hold together the shoulder and platform of the 30S subunit.</text>
</comment>
<comment type="subunit">
    <text evidence="2">Part of the 30S ribosomal subunit. Contacts proteins S8 and S17. May interact with IF1 in the 30S initiation complex.</text>
</comment>
<comment type="similarity">
    <text evidence="2">Belongs to the universal ribosomal protein uS12 family.</text>
</comment>
<evidence type="ECO:0000250" key="1"/>
<evidence type="ECO:0000255" key="2">
    <source>
        <dbReference type="HAMAP-Rule" id="MF_00403"/>
    </source>
</evidence>
<evidence type="ECO:0000305" key="3"/>
<keyword id="KW-0488">Methylation</keyword>
<keyword id="KW-0687">Ribonucleoprotein</keyword>
<keyword id="KW-0689">Ribosomal protein</keyword>
<keyword id="KW-0694">RNA-binding</keyword>
<keyword id="KW-0699">rRNA-binding</keyword>
<keyword id="KW-0820">tRNA-binding</keyword>
<protein>
    <recommendedName>
        <fullName evidence="2">Small ribosomal subunit protein uS12</fullName>
    </recommendedName>
    <alternativeName>
        <fullName evidence="3">30S ribosomal protein S12</fullName>
    </alternativeName>
</protein>
<proteinExistence type="inferred from homology"/>
<organism>
    <name type="scientific">Haemophilus influenzae (strain 86-028NP)</name>
    <dbReference type="NCBI Taxonomy" id="281310"/>
    <lineage>
        <taxon>Bacteria</taxon>
        <taxon>Pseudomonadati</taxon>
        <taxon>Pseudomonadota</taxon>
        <taxon>Gammaproteobacteria</taxon>
        <taxon>Pasteurellales</taxon>
        <taxon>Pasteurellaceae</taxon>
        <taxon>Haemophilus</taxon>
    </lineage>
</organism>
<feature type="chain" id="PRO_0000226391" description="Small ribosomal subunit protein uS12">
    <location>
        <begin position="1"/>
        <end position="124"/>
    </location>
</feature>
<feature type="modified residue" description="3-methylthioaspartic acid" evidence="1">
    <location>
        <position position="89"/>
    </location>
</feature>
<gene>
    <name evidence="2" type="primary">rpsL</name>
    <name type="ordered locus">NTHI0745</name>
</gene>